<evidence type="ECO:0000250" key="1">
    <source>
        <dbReference type="UniProtKB" id="P0ADZ7"/>
    </source>
</evidence>
<evidence type="ECO:0000255" key="2"/>
<evidence type="ECO:0000305" key="3"/>
<gene>
    <name type="primary">yajC</name>
    <name type="ordered locus">HI_0241</name>
</gene>
<dbReference type="EMBL" id="L42023">
    <property type="protein sequence ID" value="AAC21909.1"/>
    <property type="molecule type" value="Genomic_DNA"/>
</dbReference>
<dbReference type="PIR" id="A64146">
    <property type="entry name" value="A64146"/>
</dbReference>
<dbReference type="RefSeq" id="NP_438411.1">
    <property type="nucleotide sequence ID" value="NC_000907.1"/>
</dbReference>
<dbReference type="SMR" id="P44592"/>
<dbReference type="STRING" id="71421.HI_0241"/>
<dbReference type="EnsemblBacteria" id="AAC21909">
    <property type="protein sequence ID" value="AAC21909"/>
    <property type="gene ID" value="HI_0241"/>
</dbReference>
<dbReference type="KEGG" id="hin:HI_0241"/>
<dbReference type="PATRIC" id="fig|71421.8.peg.256"/>
<dbReference type="eggNOG" id="COG1862">
    <property type="taxonomic scope" value="Bacteria"/>
</dbReference>
<dbReference type="HOGENOM" id="CLU_116157_2_1_6"/>
<dbReference type="OrthoDB" id="9811406at2"/>
<dbReference type="PhylomeDB" id="P44592"/>
<dbReference type="BioCyc" id="HINF71421:G1GJ1-256-MONOMER"/>
<dbReference type="Proteomes" id="UP000000579">
    <property type="component" value="Chromosome"/>
</dbReference>
<dbReference type="GO" id="GO:0005886">
    <property type="term" value="C:plasma membrane"/>
    <property type="evidence" value="ECO:0000318"/>
    <property type="project" value="GO_Central"/>
</dbReference>
<dbReference type="GO" id="GO:0015031">
    <property type="term" value="P:protein transport"/>
    <property type="evidence" value="ECO:0007669"/>
    <property type="project" value="UniProtKB-KW"/>
</dbReference>
<dbReference type="InterPro" id="IPR003849">
    <property type="entry name" value="Preprotein_translocase_YajC"/>
</dbReference>
<dbReference type="NCBIfam" id="TIGR00739">
    <property type="entry name" value="yajC"/>
    <property type="match status" value="1"/>
</dbReference>
<dbReference type="PANTHER" id="PTHR33909">
    <property type="entry name" value="SEC TRANSLOCON ACCESSORY COMPLEX SUBUNIT YAJC"/>
    <property type="match status" value="1"/>
</dbReference>
<dbReference type="PANTHER" id="PTHR33909:SF1">
    <property type="entry name" value="SEC TRANSLOCON ACCESSORY COMPLEX SUBUNIT YAJC"/>
    <property type="match status" value="1"/>
</dbReference>
<dbReference type="Pfam" id="PF02699">
    <property type="entry name" value="YajC"/>
    <property type="match status" value="1"/>
</dbReference>
<dbReference type="PRINTS" id="PR01853">
    <property type="entry name" value="YAJCTRNLCASE"/>
</dbReference>
<dbReference type="SMART" id="SM01323">
    <property type="entry name" value="YajC"/>
    <property type="match status" value="1"/>
</dbReference>
<keyword id="KW-0997">Cell inner membrane</keyword>
<keyword id="KW-1003">Cell membrane</keyword>
<keyword id="KW-0472">Membrane</keyword>
<keyword id="KW-0653">Protein transport</keyword>
<keyword id="KW-1185">Reference proteome</keyword>
<keyword id="KW-0811">Translocation</keyword>
<keyword id="KW-0812">Transmembrane</keyword>
<keyword id="KW-1133">Transmembrane helix</keyword>
<keyword id="KW-0813">Transport</keyword>
<protein>
    <recommendedName>
        <fullName>Sec translocon accessory complex subunit YajC</fullName>
    </recommendedName>
</protein>
<comment type="function">
    <text evidence="1">The SecYEG-SecDF-YajC-YidC holo-translocon (HTL) protein secretase/insertase is a supercomplex required for protein secretion, insertion of proteins into membranes, and assembly of membrane protein complexes. While the SecYEG complex is essential for assembly of a number of proteins and complexes, the SecDF-YajC-YidC subcomplex facilitates these functions.</text>
</comment>
<comment type="subunit">
    <text evidence="1">Part of the SecDF-YidC-YajC translocase complex. The SecDF-YidC-YajC translocase forms a supercomplex with SecYEG, called the holo-translocon (HTL).</text>
</comment>
<comment type="subcellular location">
    <subcellularLocation>
        <location evidence="1">Cell inner membrane</location>
        <topology evidence="1">Single-pass membrane protein</topology>
    </subcellularLocation>
</comment>
<comment type="similarity">
    <text evidence="3">Belongs to the YajC family.</text>
</comment>
<reference key="1">
    <citation type="journal article" date="1995" name="Science">
        <title>Whole-genome random sequencing and assembly of Haemophilus influenzae Rd.</title>
        <authorList>
            <person name="Fleischmann R.D."/>
            <person name="Adams M.D."/>
            <person name="White O."/>
            <person name="Clayton R.A."/>
            <person name="Kirkness E.F."/>
            <person name="Kerlavage A.R."/>
            <person name="Bult C.J."/>
            <person name="Tomb J.-F."/>
            <person name="Dougherty B.A."/>
            <person name="Merrick J.M."/>
            <person name="McKenney K."/>
            <person name="Sutton G.G."/>
            <person name="FitzHugh W."/>
            <person name="Fields C.A."/>
            <person name="Gocayne J.D."/>
            <person name="Scott J.D."/>
            <person name="Shirley R."/>
            <person name="Liu L.-I."/>
            <person name="Glodek A."/>
            <person name="Kelley J.M."/>
            <person name="Weidman J.F."/>
            <person name="Phillips C.A."/>
            <person name="Spriggs T."/>
            <person name="Hedblom E."/>
            <person name="Cotton M.D."/>
            <person name="Utterback T.R."/>
            <person name="Hanna M.C."/>
            <person name="Nguyen D.T."/>
            <person name="Saudek D.M."/>
            <person name="Brandon R.C."/>
            <person name="Fine L.D."/>
            <person name="Fritchman J.L."/>
            <person name="Fuhrmann J.L."/>
            <person name="Geoghagen N.S.M."/>
            <person name="Gnehm C.L."/>
            <person name="McDonald L.A."/>
            <person name="Small K.V."/>
            <person name="Fraser C.M."/>
            <person name="Smith H.O."/>
            <person name="Venter J.C."/>
        </authorList>
    </citation>
    <scope>NUCLEOTIDE SEQUENCE [LARGE SCALE GENOMIC DNA]</scope>
    <source>
        <strain>ATCC 51907 / DSM 11121 / KW20 / Rd</strain>
    </source>
</reference>
<proteinExistence type="inferred from homology"/>
<feature type="chain" id="PRO_0000097017" description="Sec translocon accessory complex subunit YajC">
    <location>
        <begin position="1"/>
        <end position="97"/>
    </location>
</feature>
<feature type="transmembrane region" description="Helical" evidence="2">
    <location>
        <begin position="5"/>
        <end position="25"/>
    </location>
</feature>
<sequence length="97" mass="10754">MEAQSPMSTLFIFVIFGLIFYFMIYRPQAKRNKEHKKLMSELAKGTEVLTAGGVIGKITKVTEGSDSIVIALNDTTEITINRNYIVSVLPKGSLKSL</sequence>
<accession>P44592</accession>
<organism>
    <name type="scientific">Haemophilus influenzae (strain ATCC 51907 / DSM 11121 / KW20 / Rd)</name>
    <dbReference type="NCBI Taxonomy" id="71421"/>
    <lineage>
        <taxon>Bacteria</taxon>
        <taxon>Pseudomonadati</taxon>
        <taxon>Pseudomonadota</taxon>
        <taxon>Gammaproteobacteria</taxon>
        <taxon>Pasteurellales</taxon>
        <taxon>Pasteurellaceae</taxon>
        <taxon>Haemophilus</taxon>
    </lineage>
</organism>
<name>YAJC_HAEIN</name>